<sequence>MKKIGVLAFQGGVIEHVKKIEELGHIPVLVKKNEDLEGIDGLILPGGESTTIGKFLIETGLKDKILSLAEQGMPMWGTCAGAILLSKSIKNQGSGVLPLLDIVIERNAYGSQIDSFRKEVFVPRFNKTTECVFIRAPKIVDVGSNVEVLAQLDTPIAVLQGTILATTFHPELTSQNYWHSFFVENMIK</sequence>
<proteinExistence type="inferred from homology"/>
<accession>A4XIB6</accession>
<feature type="chain" id="PRO_0000335567" description="Pyridoxal 5'-phosphate synthase subunit PdxT">
    <location>
        <begin position="1"/>
        <end position="188"/>
    </location>
</feature>
<feature type="active site" description="Nucleophile" evidence="1">
    <location>
        <position position="79"/>
    </location>
</feature>
<feature type="active site" description="Charge relay system" evidence="1">
    <location>
        <position position="169"/>
    </location>
</feature>
<feature type="active site" description="Charge relay system" evidence="1">
    <location>
        <position position="171"/>
    </location>
</feature>
<feature type="binding site" evidence="1">
    <location>
        <begin position="47"/>
        <end position="49"/>
    </location>
    <ligand>
        <name>L-glutamine</name>
        <dbReference type="ChEBI" id="CHEBI:58359"/>
    </ligand>
</feature>
<feature type="binding site" evidence="1">
    <location>
        <position position="106"/>
    </location>
    <ligand>
        <name>L-glutamine</name>
        <dbReference type="ChEBI" id="CHEBI:58359"/>
    </ligand>
</feature>
<feature type="binding site" evidence="1">
    <location>
        <begin position="134"/>
        <end position="135"/>
    </location>
    <ligand>
        <name>L-glutamine</name>
        <dbReference type="ChEBI" id="CHEBI:58359"/>
    </ligand>
</feature>
<protein>
    <recommendedName>
        <fullName evidence="1">Pyridoxal 5'-phosphate synthase subunit PdxT</fullName>
        <ecNumber evidence="1">4.3.3.6</ecNumber>
    </recommendedName>
    <alternativeName>
        <fullName evidence="1">Pdx2</fullName>
    </alternativeName>
    <alternativeName>
        <fullName evidence="1">Pyridoxal 5'-phosphate synthase glutaminase subunit</fullName>
        <ecNumber evidence="1">3.5.1.2</ecNumber>
    </alternativeName>
</protein>
<keyword id="KW-0315">Glutamine amidotransferase</keyword>
<keyword id="KW-0378">Hydrolase</keyword>
<keyword id="KW-0456">Lyase</keyword>
<keyword id="KW-0663">Pyridoxal phosphate</keyword>
<evidence type="ECO:0000255" key="1">
    <source>
        <dbReference type="HAMAP-Rule" id="MF_01615"/>
    </source>
</evidence>
<name>PDXT_CALS8</name>
<comment type="function">
    <text evidence="1">Catalyzes the hydrolysis of glutamine to glutamate and ammonia as part of the biosynthesis of pyridoxal 5'-phosphate. The resulting ammonia molecule is channeled to the active site of PdxS.</text>
</comment>
<comment type="catalytic activity">
    <reaction evidence="1">
        <text>aldehydo-D-ribose 5-phosphate + D-glyceraldehyde 3-phosphate + L-glutamine = pyridoxal 5'-phosphate + L-glutamate + phosphate + 3 H2O + H(+)</text>
        <dbReference type="Rhea" id="RHEA:31507"/>
        <dbReference type="ChEBI" id="CHEBI:15377"/>
        <dbReference type="ChEBI" id="CHEBI:15378"/>
        <dbReference type="ChEBI" id="CHEBI:29985"/>
        <dbReference type="ChEBI" id="CHEBI:43474"/>
        <dbReference type="ChEBI" id="CHEBI:58273"/>
        <dbReference type="ChEBI" id="CHEBI:58359"/>
        <dbReference type="ChEBI" id="CHEBI:59776"/>
        <dbReference type="ChEBI" id="CHEBI:597326"/>
        <dbReference type="EC" id="4.3.3.6"/>
    </reaction>
</comment>
<comment type="catalytic activity">
    <reaction evidence="1">
        <text>L-glutamine + H2O = L-glutamate + NH4(+)</text>
        <dbReference type="Rhea" id="RHEA:15889"/>
        <dbReference type="ChEBI" id="CHEBI:15377"/>
        <dbReference type="ChEBI" id="CHEBI:28938"/>
        <dbReference type="ChEBI" id="CHEBI:29985"/>
        <dbReference type="ChEBI" id="CHEBI:58359"/>
        <dbReference type="EC" id="3.5.1.2"/>
    </reaction>
</comment>
<comment type="pathway">
    <text evidence="1">Cofactor biosynthesis; pyridoxal 5'-phosphate biosynthesis.</text>
</comment>
<comment type="subunit">
    <text evidence="1">In the presence of PdxS, forms a dodecamer of heterodimers. Only shows activity in the heterodimer.</text>
</comment>
<comment type="similarity">
    <text evidence="1">Belongs to the glutaminase PdxT/SNO family.</text>
</comment>
<reference key="1">
    <citation type="submission" date="2007-04" db="EMBL/GenBank/DDBJ databases">
        <title>Genome sequence of the thermophilic hydrogen-producing bacterium Caldicellulosiruptor saccharolyticus DSM 8903.</title>
        <authorList>
            <person name="Copeland A."/>
            <person name="Lucas S."/>
            <person name="Lapidus A."/>
            <person name="Barry K."/>
            <person name="Detter J.C."/>
            <person name="Glavina del Rio T."/>
            <person name="Hammon N."/>
            <person name="Israni S."/>
            <person name="Dalin E."/>
            <person name="Tice H."/>
            <person name="Pitluck S."/>
            <person name="Kiss H."/>
            <person name="Brettin T."/>
            <person name="Bruce D."/>
            <person name="Han C."/>
            <person name="Schmutz J."/>
            <person name="Larimer F."/>
            <person name="Land M."/>
            <person name="Hauser L."/>
            <person name="Kyrpides N."/>
            <person name="Lykidis A."/>
            <person name="van de Werken H.J.G."/>
            <person name="Verhaart M.R.A."/>
            <person name="VanFossen A.L."/>
            <person name="Lewis D.L."/>
            <person name="Nichols J.D."/>
            <person name="Goorissen H.P."/>
            <person name="van Niel E.W.J."/>
            <person name="Stams F.J.M."/>
            <person name="Willquist K.U."/>
            <person name="Ward D.E."/>
            <person name="van der Oost J."/>
            <person name="Kelly R.M."/>
            <person name="Kengen S.M.W."/>
            <person name="Richardson P."/>
        </authorList>
    </citation>
    <scope>NUCLEOTIDE SEQUENCE [LARGE SCALE GENOMIC DNA]</scope>
    <source>
        <strain>ATCC 43494 / DSM 8903 / Tp8T 6331</strain>
    </source>
</reference>
<gene>
    <name evidence="1" type="primary">pdxT</name>
    <name type="ordered locus">Csac_1037</name>
</gene>
<dbReference type="EC" id="4.3.3.6" evidence="1"/>
<dbReference type="EC" id="3.5.1.2" evidence="1"/>
<dbReference type="EMBL" id="CP000679">
    <property type="protein sequence ID" value="ABP66651.1"/>
    <property type="molecule type" value="Genomic_DNA"/>
</dbReference>
<dbReference type="RefSeq" id="WP_011916597.1">
    <property type="nucleotide sequence ID" value="NC_009437.1"/>
</dbReference>
<dbReference type="SMR" id="A4XIB6"/>
<dbReference type="STRING" id="351627.Csac_1037"/>
<dbReference type="KEGG" id="csc:Csac_1037"/>
<dbReference type="eggNOG" id="COG0311">
    <property type="taxonomic scope" value="Bacteria"/>
</dbReference>
<dbReference type="HOGENOM" id="CLU_069674_2_0_9"/>
<dbReference type="OrthoDB" id="9810320at2"/>
<dbReference type="UniPathway" id="UPA00245"/>
<dbReference type="Proteomes" id="UP000000256">
    <property type="component" value="Chromosome"/>
</dbReference>
<dbReference type="GO" id="GO:0005829">
    <property type="term" value="C:cytosol"/>
    <property type="evidence" value="ECO:0007669"/>
    <property type="project" value="TreeGrafter"/>
</dbReference>
<dbReference type="GO" id="GO:1903600">
    <property type="term" value="C:glutaminase complex"/>
    <property type="evidence" value="ECO:0007669"/>
    <property type="project" value="TreeGrafter"/>
</dbReference>
<dbReference type="GO" id="GO:0004359">
    <property type="term" value="F:glutaminase activity"/>
    <property type="evidence" value="ECO:0007669"/>
    <property type="project" value="UniProtKB-UniRule"/>
</dbReference>
<dbReference type="GO" id="GO:0036381">
    <property type="term" value="F:pyridoxal 5'-phosphate synthase (glutamine hydrolysing) activity"/>
    <property type="evidence" value="ECO:0007669"/>
    <property type="project" value="UniProtKB-UniRule"/>
</dbReference>
<dbReference type="GO" id="GO:0006543">
    <property type="term" value="P:glutamine catabolic process"/>
    <property type="evidence" value="ECO:0007669"/>
    <property type="project" value="UniProtKB-UniRule"/>
</dbReference>
<dbReference type="GO" id="GO:0042823">
    <property type="term" value="P:pyridoxal phosphate biosynthetic process"/>
    <property type="evidence" value="ECO:0007669"/>
    <property type="project" value="UniProtKB-UniRule"/>
</dbReference>
<dbReference type="GO" id="GO:0008614">
    <property type="term" value="P:pyridoxine metabolic process"/>
    <property type="evidence" value="ECO:0007669"/>
    <property type="project" value="TreeGrafter"/>
</dbReference>
<dbReference type="CDD" id="cd01749">
    <property type="entry name" value="GATase1_PB"/>
    <property type="match status" value="1"/>
</dbReference>
<dbReference type="FunFam" id="3.40.50.880:FF:000010">
    <property type="entry name" value="uncharacterized protein LOC100176842 isoform X2"/>
    <property type="match status" value="1"/>
</dbReference>
<dbReference type="Gene3D" id="3.40.50.880">
    <property type="match status" value="1"/>
</dbReference>
<dbReference type="HAMAP" id="MF_01615">
    <property type="entry name" value="PdxT"/>
    <property type="match status" value="1"/>
</dbReference>
<dbReference type="InterPro" id="IPR029062">
    <property type="entry name" value="Class_I_gatase-like"/>
</dbReference>
<dbReference type="InterPro" id="IPR002161">
    <property type="entry name" value="PdxT/SNO"/>
</dbReference>
<dbReference type="InterPro" id="IPR021196">
    <property type="entry name" value="PdxT/SNO_CS"/>
</dbReference>
<dbReference type="NCBIfam" id="TIGR03800">
    <property type="entry name" value="PLP_synth_Pdx2"/>
    <property type="match status" value="1"/>
</dbReference>
<dbReference type="PANTHER" id="PTHR31559">
    <property type="entry name" value="PYRIDOXAL 5'-PHOSPHATE SYNTHASE SUBUNIT SNO"/>
    <property type="match status" value="1"/>
</dbReference>
<dbReference type="PANTHER" id="PTHR31559:SF0">
    <property type="entry name" value="PYRIDOXAL 5'-PHOSPHATE SYNTHASE SUBUNIT SNO1-RELATED"/>
    <property type="match status" value="1"/>
</dbReference>
<dbReference type="Pfam" id="PF01174">
    <property type="entry name" value="SNO"/>
    <property type="match status" value="1"/>
</dbReference>
<dbReference type="PIRSF" id="PIRSF005639">
    <property type="entry name" value="Glut_amidoT_SNO"/>
    <property type="match status" value="1"/>
</dbReference>
<dbReference type="SUPFAM" id="SSF52317">
    <property type="entry name" value="Class I glutamine amidotransferase-like"/>
    <property type="match status" value="1"/>
</dbReference>
<dbReference type="PROSITE" id="PS01236">
    <property type="entry name" value="PDXT_SNO_1"/>
    <property type="match status" value="1"/>
</dbReference>
<dbReference type="PROSITE" id="PS51130">
    <property type="entry name" value="PDXT_SNO_2"/>
    <property type="match status" value="1"/>
</dbReference>
<organism>
    <name type="scientific">Caldicellulosiruptor saccharolyticus (strain ATCC 43494 / DSM 8903 / Tp8T 6331)</name>
    <dbReference type="NCBI Taxonomy" id="351627"/>
    <lineage>
        <taxon>Bacteria</taxon>
        <taxon>Bacillati</taxon>
        <taxon>Bacillota</taxon>
        <taxon>Bacillota incertae sedis</taxon>
        <taxon>Caldicellulosiruptorales</taxon>
        <taxon>Caldicellulosiruptoraceae</taxon>
        <taxon>Caldicellulosiruptor</taxon>
    </lineage>
</organism>